<reference key="1">
    <citation type="journal article" date="2003" name="Proc. Natl. Acad. Sci. U.S.A.">
        <title>Complete genome sequence and analysis of Wolinella succinogenes.</title>
        <authorList>
            <person name="Baar C."/>
            <person name="Eppinger M."/>
            <person name="Raddatz G."/>
            <person name="Simon J."/>
            <person name="Lanz C."/>
            <person name="Klimmek O."/>
            <person name="Nandakumar R."/>
            <person name="Gross R."/>
            <person name="Rosinus A."/>
            <person name="Keller H."/>
            <person name="Jagtap P."/>
            <person name="Linke B."/>
            <person name="Meyer F."/>
            <person name="Lederer H."/>
            <person name="Schuster S.C."/>
        </authorList>
    </citation>
    <scope>NUCLEOTIDE SEQUENCE [LARGE SCALE GENOMIC DNA]</scope>
    <source>
        <strain>ATCC 29543 / DSM 1740 / CCUG 13145 / JCM 31913 / LMG 7466 / NCTC 11488 / FDC 602W</strain>
    </source>
</reference>
<sequence>MIMADLERIKIEPSWKEVLKEEFTKPYFDSIRESYLQAKSSGAILYPPAPLLFNAFNLTPFDQVKAVILGQDPYHAPHQAMGLCFSVPKGVALPASLRNVYKELERDLGIPPAKHGDLTSWAKQGVFMLNAILSVEQGKAGSHQKFGWQTFTDAAISALSRKKKGVVFLLWGNFAREKRVLIDSTKHTILESAHPSPLAGNRYFGNGHFSKTNEILKVQGEREILWRLPE</sequence>
<name>UNG_WOLSU</name>
<keyword id="KW-0963">Cytoplasm</keyword>
<keyword id="KW-0227">DNA damage</keyword>
<keyword id="KW-0234">DNA repair</keyword>
<keyword id="KW-0378">Hydrolase</keyword>
<keyword id="KW-1185">Reference proteome</keyword>
<proteinExistence type="inferred from homology"/>
<comment type="function">
    <text evidence="1">Excises uracil residues from the DNA which can arise as a result of misincorporation of dUMP residues by DNA polymerase or due to deamination of cytosine.</text>
</comment>
<comment type="catalytic activity">
    <reaction evidence="1">
        <text>Hydrolyzes single-stranded DNA or mismatched double-stranded DNA and polynucleotides, releasing free uracil.</text>
        <dbReference type="EC" id="3.2.2.27"/>
    </reaction>
</comment>
<comment type="subcellular location">
    <subcellularLocation>
        <location evidence="1">Cytoplasm</location>
    </subcellularLocation>
</comment>
<comment type="similarity">
    <text evidence="1">Belongs to the uracil-DNA glycosylase (UDG) superfamily. UNG family.</text>
</comment>
<dbReference type="EC" id="3.2.2.27" evidence="1"/>
<dbReference type="EMBL" id="BX571658">
    <property type="protein sequence ID" value="CAE09691.1"/>
    <property type="molecule type" value="Genomic_DNA"/>
</dbReference>
<dbReference type="SMR" id="Q7MA00"/>
<dbReference type="STRING" id="273121.WS0557"/>
<dbReference type="KEGG" id="wsu:WS0557"/>
<dbReference type="eggNOG" id="COG0692">
    <property type="taxonomic scope" value="Bacteria"/>
</dbReference>
<dbReference type="HOGENOM" id="CLU_032162_3_0_7"/>
<dbReference type="Proteomes" id="UP000000422">
    <property type="component" value="Chromosome"/>
</dbReference>
<dbReference type="GO" id="GO:0005737">
    <property type="term" value="C:cytoplasm"/>
    <property type="evidence" value="ECO:0007669"/>
    <property type="project" value="UniProtKB-SubCell"/>
</dbReference>
<dbReference type="GO" id="GO:0004844">
    <property type="term" value="F:uracil DNA N-glycosylase activity"/>
    <property type="evidence" value="ECO:0007669"/>
    <property type="project" value="UniProtKB-UniRule"/>
</dbReference>
<dbReference type="GO" id="GO:0097510">
    <property type="term" value="P:base-excision repair, AP site formation via deaminated base removal"/>
    <property type="evidence" value="ECO:0007669"/>
    <property type="project" value="TreeGrafter"/>
</dbReference>
<dbReference type="CDD" id="cd10027">
    <property type="entry name" value="UDG-F1-like"/>
    <property type="match status" value="1"/>
</dbReference>
<dbReference type="FunFam" id="3.40.470.10:FF:000001">
    <property type="entry name" value="Uracil-DNA glycosylase"/>
    <property type="match status" value="1"/>
</dbReference>
<dbReference type="Gene3D" id="3.40.470.10">
    <property type="entry name" value="Uracil-DNA glycosylase-like domain"/>
    <property type="match status" value="1"/>
</dbReference>
<dbReference type="HAMAP" id="MF_00148">
    <property type="entry name" value="UDG"/>
    <property type="match status" value="1"/>
</dbReference>
<dbReference type="InterPro" id="IPR002043">
    <property type="entry name" value="UDG_fam1"/>
</dbReference>
<dbReference type="InterPro" id="IPR018085">
    <property type="entry name" value="Ura-DNA_Glyclase_AS"/>
</dbReference>
<dbReference type="InterPro" id="IPR005122">
    <property type="entry name" value="Uracil-DNA_glycosylase-like"/>
</dbReference>
<dbReference type="InterPro" id="IPR036895">
    <property type="entry name" value="Uracil-DNA_glycosylase-like_sf"/>
</dbReference>
<dbReference type="NCBIfam" id="NF003588">
    <property type="entry name" value="PRK05254.1-1"/>
    <property type="match status" value="1"/>
</dbReference>
<dbReference type="NCBIfam" id="NF003589">
    <property type="entry name" value="PRK05254.1-2"/>
    <property type="match status" value="1"/>
</dbReference>
<dbReference type="NCBIfam" id="NF003591">
    <property type="entry name" value="PRK05254.1-4"/>
    <property type="match status" value="1"/>
</dbReference>
<dbReference type="NCBIfam" id="NF003592">
    <property type="entry name" value="PRK05254.1-5"/>
    <property type="match status" value="1"/>
</dbReference>
<dbReference type="NCBIfam" id="TIGR00628">
    <property type="entry name" value="ung"/>
    <property type="match status" value="1"/>
</dbReference>
<dbReference type="PANTHER" id="PTHR11264">
    <property type="entry name" value="URACIL-DNA GLYCOSYLASE"/>
    <property type="match status" value="1"/>
</dbReference>
<dbReference type="PANTHER" id="PTHR11264:SF0">
    <property type="entry name" value="URACIL-DNA GLYCOSYLASE"/>
    <property type="match status" value="1"/>
</dbReference>
<dbReference type="Pfam" id="PF03167">
    <property type="entry name" value="UDG"/>
    <property type="match status" value="1"/>
</dbReference>
<dbReference type="SMART" id="SM00986">
    <property type="entry name" value="UDG"/>
    <property type="match status" value="1"/>
</dbReference>
<dbReference type="SMART" id="SM00987">
    <property type="entry name" value="UreE_C"/>
    <property type="match status" value="1"/>
</dbReference>
<dbReference type="SUPFAM" id="SSF52141">
    <property type="entry name" value="Uracil-DNA glycosylase-like"/>
    <property type="match status" value="1"/>
</dbReference>
<dbReference type="PROSITE" id="PS00130">
    <property type="entry name" value="U_DNA_GLYCOSYLASE"/>
    <property type="match status" value="1"/>
</dbReference>
<accession>Q7MA00</accession>
<evidence type="ECO:0000255" key="1">
    <source>
        <dbReference type="HAMAP-Rule" id="MF_00148"/>
    </source>
</evidence>
<protein>
    <recommendedName>
        <fullName evidence="1">Uracil-DNA glycosylase</fullName>
        <shortName evidence="1">UDG</shortName>
        <ecNumber evidence="1">3.2.2.27</ecNumber>
    </recommendedName>
</protein>
<feature type="chain" id="PRO_0000176165" description="Uracil-DNA glycosylase">
    <location>
        <begin position="1"/>
        <end position="230"/>
    </location>
</feature>
<feature type="active site" description="Proton acceptor" evidence="1">
    <location>
        <position position="72"/>
    </location>
</feature>
<gene>
    <name evidence="1" type="primary">ung</name>
    <name type="ordered locus">WS0557</name>
</gene>
<organism>
    <name type="scientific">Wolinella succinogenes (strain ATCC 29543 / DSM 1740 / CCUG 13145 / JCM 31913 / LMG 7466 / NCTC 11488 / FDC 602W)</name>
    <name type="common">Vibrio succinogenes</name>
    <dbReference type="NCBI Taxonomy" id="273121"/>
    <lineage>
        <taxon>Bacteria</taxon>
        <taxon>Pseudomonadati</taxon>
        <taxon>Campylobacterota</taxon>
        <taxon>Epsilonproteobacteria</taxon>
        <taxon>Campylobacterales</taxon>
        <taxon>Helicobacteraceae</taxon>
        <taxon>Wolinella</taxon>
    </lineage>
</organism>